<keyword id="KW-0687">Ribonucleoprotein</keyword>
<keyword id="KW-0689">Ribosomal protein</keyword>
<keyword id="KW-0694">RNA-binding</keyword>
<keyword id="KW-0699">rRNA-binding</keyword>
<protein>
    <recommendedName>
        <fullName evidence="1">Large ribosomal subunit protein uL2</fullName>
    </recommendedName>
    <alternativeName>
        <fullName evidence="3">50S ribosomal protein L2</fullName>
    </alternativeName>
</protein>
<accession>Q6FZC5</accession>
<gene>
    <name evidence="1" type="primary">rplB</name>
    <name type="ordered locus">BQ08200</name>
</gene>
<comment type="function">
    <text evidence="1">One of the primary rRNA binding proteins. Required for association of the 30S and 50S subunits to form the 70S ribosome, for tRNA binding and peptide bond formation. It has been suggested to have peptidyltransferase activity; this is somewhat controversial. Makes several contacts with the 16S rRNA in the 70S ribosome.</text>
</comment>
<comment type="subunit">
    <text evidence="1">Part of the 50S ribosomal subunit. Forms a bridge to the 30S subunit in the 70S ribosome.</text>
</comment>
<comment type="similarity">
    <text evidence="1">Belongs to the universal ribosomal protein uL2 family.</text>
</comment>
<sequence length="277" mass="30209">MAFKHFNPTTPGQRQLVIVDRSCLYKGKSVKALTAGLSSKGGRNNHGRVTARFQGGGHKRSYRFVDFKRLKRGVFAKVERLEYDPNRTAFIALIRYEDGQLSYILAPQRLDVGDSIIAGSNVDVKPGNAMPLGNMPVGTIIHNVEMKPGKGGQIARSAGTYAQLVGRGQGMVILRLNSGEQRLVSGSCFATVGAVSNPDHANINDGKAGRSRWRGKRPHVRGVAMNPVDHPHGGGEGRTSGGRHPVSPWGKSTKGKRTRSNKATDKFIMHTRHQRKK</sequence>
<dbReference type="EMBL" id="BX897700">
    <property type="protein sequence ID" value="CAF26303.1"/>
    <property type="molecule type" value="Genomic_DNA"/>
</dbReference>
<dbReference type="RefSeq" id="WP_011179549.1">
    <property type="nucleotide sequence ID" value="NC_005955.1"/>
</dbReference>
<dbReference type="SMR" id="Q6FZC5"/>
<dbReference type="GeneID" id="56532824"/>
<dbReference type="KEGG" id="bqu:BQ08200"/>
<dbReference type="eggNOG" id="COG0090">
    <property type="taxonomic scope" value="Bacteria"/>
</dbReference>
<dbReference type="HOGENOM" id="CLU_036235_2_1_5"/>
<dbReference type="OrthoDB" id="9778722at2"/>
<dbReference type="Proteomes" id="UP000000597">
    <property type="component" value="Chromosome"/>
</dbReference>
<dbReference type="GO" id="GO:0015934">
    <property type="term" value="C:large ribosomal subunit"/>
    <property type="evidence" value="ECO:0007669"/>
    <property type="project" value="InterPro"/>
</dbReference>
<dbReference type="GO" id="GO:0019843">
    <property type="term" value="F:rRNA binding"/>
    <property type="evidence" value="ECO:0007669"/>
    <property type="project" value="UniProtKB-UniRule"/>
</dbReference>
<dbReference type="GO" id="GO:0003735">
    <property type="term" value="F:structural constituent of ribosome"/>
    <property type="evidence" value="ECO:0007669"/>
    <property type="project" value="InterPro"/>
</dbReference>
<dbReference type="GO" id="GO:0016740">
    <property type="term" value="F:transferase activity"/>
    <property type="evidence" value="ECO:0007669"/>
    <property type="project" value="InterPro"/>
</dbReference>
<dbReference type="GO" id="GO:0002181">
    <property type="term" value="P:cytoplasmic translation"/>
    <property type="evidence" value="ECO:0007669"/>
    <property type="project" value="TreeGrafter"/>
</dbReference>
<dbReference type="FunFam" id="2.30.30.30:FF:000055">
    <property type="entry name" value="50S ribosomal protein L2"/>
    <property type="match status" value="1"/>
</dbReference>
<dbReference type="FunFam" id="4.10.950.10:FF:000001">
    <property type="entry name" value="50S ribosomal protein L2"/>
    <property type="match status" value="1"/>
</dbReference>
<dbReference type="Gene3D" id="2.30.30.30">
    <property type="match status" value="1"/>
</dbReference>
<dbReference type="Gene3D" id="2.40.50.140">
    <property type="entry name" value="Nucleic acid-binding proteins"/>
    <property type="match status" value="1"/>
</dbReference>
<dbReference type="Gene3D" id="4.10.950.10">
    <property type="entry name" value="Ribosomal protein L2, domain 3"/>
    <property type="match status" value="1"/>
</dbReference>
<dbReference type="HAMAP" id="MF_01320_B">
    <property type="entry name" value="Ribosomal_uL2_B"/>
    <property type="match status" value="1"/>
</dbReference>
<dbReference type="InterPro" id="IPR012340">
    <property type="entry name" value="NA-bd_OB-fold"/>
</dbReference>
<dbReference type="InterPro" id="IPR014722">
    <property type="entry name" value="Rib_uL2_dom2"/>
</dbReference>
<dbReference type="InterPro" id="IPR002171">
    <property type="entry name" value="Ribosomal_uL2"/>
</dbReference>
<dbReference type="InterPro" id="IPR005880">
    <property type="entry name" value="Ribosomal_uL2_bac/org-type"/>
</dbReference>
<dbReference type="InterPro" id="IPR022669">
    <property type="entry name" value="Ribosomal_uL2_C"/>
</dbReference>
<dbReference type="InterPro" id="IPR022671">
    <property type="entry name" value="Ribosomal_uL2_CS"/>
</dbReference>
<dbReference type="InterPro" id="IPR014726">
    <property type="entry name" value="Ribosomal_uL2_dom3"/>
</dbReference>
<dbReference type="InterPro" id="IPR022666">
    <property type="entry name" value="Ribosomal_uL2_RNA-bd_dom"/>
</dbReference>
<dbReference type="InterPro" id="IPR008991">
    <property type="entry name" value="Translation_prot_SH3-like_sf"/>
</dbReference>
<dbReference type="NCBIfam" id="TIGR01171">
    <property type="entry name" value="rplB_bact"/>
    <property type="match status" value="1"/>
</dbReference>
<dbReference type="PANTHER" id="PTHR13691:SF5">
    <property type="entry name" value="LARGE RIBOSOMAL SUBUNIT PROTEIN UL2M"/>
    <property type="match status" value="1"/>
</dbReference>
<dbReference type="PANTHER" id="PTHR13691">
    <property type="entry name" value="RIBOSOMAL PROTEIN L2"/>
    <property type="match status" value="1"/>
</dbReference>
<dbReference type="Pfam" id="PF00181">
    <property type="entry name" value="Ribosomal_L2"/>
    <property type="match status" value="1"/>
</dbReference>
<dbReference type="Pfam" id="PF03947">
    <property type="entry name" value="Ribosomal_L2_C"/>
    <property type="match status" value="1"/>
</dbReference>
<dbReference type="PIRSF" id="PIRSF002158">
    <property type="entry name" value="Ribosomal_L2"/>
    <property type="match status" value="1"/>
</dbReference>
<dbReference type="SMART" id="SM01383">
    <property type="entry name" value="Ribosomal_L2"/>
    <property type="match status" value="1"/>
</dbReference>
<dbReference type="SMART" id="SM01382">
    <property type="entry name" value="Ribosomal_L2_C"/>
    <property type="match status" value="1"/>
</dbReference>
<dbReference type="SUPFAM" id="SSF50249">
    <property type="entry name" value="Nucleic acid-binding proteins"/>
    <property type="match status" value="1"/>
</dbReference>
<dbReference type="SUPFAM" id="SSF50104">
    <property type="entry name" value="Translation proteins SH3-like domain"/>
    <property type="match status" value="1"/>
</dbReference>
<dbReference type="PROSITE" id="PS00467">
    <property type="entry name" value="RIBOSOMAL_L2"/>
    <property type="match status" value="1"/>
</dbReference>
<proteinExistence type="inferred from homology"/>
<name>RL2_BARQU</name>
<organism>
    <name type="scientific">Bartonella quintana (strain Toulouse)</name>
    <name type="common">Rochalimaea quintana</name>
    <dbReference type="NCBI Taxonomy" id="283165"/>
    <lineage>
        <taxon>Bacteria</taxon>
        <taxon>Pseudomonadati</taxon>
        <taxon>Pseudomonadota</taxon>
        <taxon>Alphaproteobacteria</taxon>
        <taxon>Hyphomicrobiales</taxon>
        <taxon>Bartonellaceae</taxon>
        <taxon>Bartonella</taxon>
    </lineage>
</organism>
<feature type="chain" id="PRO_0000237157" description="Large ribosomal subunit protein uL2">
    <location>
        <begin position="1"/>
        <end position="277"/>
    </location>
</feature>
<feature type="region of interest" description="Disordered" evidence="2">
    <location>
        <begin position="222"/>
        <end position="277"/>
    </location>
</feature>
<evidence type="ECO:0000255" key="1">
    <source>
        <dbReference type="HAMAP-Rule" id="MF_01320"/>
    </source>
</evidence>
<evidence type="ECO:0000256" key="2">
    <source>
        <dbReference type="SAM" id="MobiDB-lite"/>
    </source>
</evidence>
<evidence type="ECO:0000305" key="3"/>
<reference key="1">
    <citation type="journal article" date="2004" name="Proc. Natl. Acad. Sci. U.S.A.">
        <title>The louse-borne human pathogen Bartonella quintana is a genomic derivative of the zoonotic agent Bartonella henselae.</title>
        <authorList>
            <person name="Alsmark U.C.M."/>
            <person name="Frank A.C."/>
            <person name="Karlberg E.O."/>
            <person name="Legault B.-A."/>
            <person name="Ardell D.H."/>
            <person name="Canbaeck B."/>
            <person name="Eriksson A.-S."/>
            <person name="Naeslund A.K."/>
            <person name="Handley S.A."/>
            <person name="Huvet M."/>
            <person name="La Scola B."/>
            <person name="Holmberg M."/>
            <person name="Andersson S.G.E."/>
        </authorList>
    </citation>
    <scope>NUCLEOTIDE SEQUENCE [LARGE SCALE GENOMIC DNA]</scope>
    <source>
        <strain>Toulouse</strain>
    </source>
</reference>